<keyword id="KW-0378">Hydrolase</keyword>
<keyword id="KW-0460">Magnesium</keyword>
<keyword id="KW-0547">Nucleotide-binding</keyword>
<keyword id="KW-1185">Reference proteome</keyword>
<evidence type="ECO:0000250" key="1">
    <source>
        <dbReference type="UniProtKB" id="P49773"/>
    </source>
</evidence>
<evidence type="ECO:0000250" key="2">
    <source>
        <dbReference type="UniProtKB" id="Q59WG0"/>
    </source>
</evidence>
<evidence type="ECO:0000255" key="3">
    <source>
        <dbReference type="PROSITE-ProRule" id="PRU00464"/>
    </source>
</evidence>
<evidence type="ECO:0000269" key="4">
    <source>
    </source>
</evidence>
<evidence type="ECO:0000269" key="5">
    <source>
    </source>
</evidence>
<evidence type="ECO:0000269" key="6">
    <source>
    </source>
</evidence>
<evidence type="ECO:0000269" key="7">
    <source>
    </source>
</evidence>
<evidence type="ECO:0000269" key="8">
    <source>
    </source>
</evidence>
<evidence type="ECO:0000269" key="9">
    <source>
    </source>
</evidence>
<evidence type="ECO:0000269" key="10">
    <source>
    </source>
</evidence>
<evidence type="ECO:0000303" key="11">
    <source>
    </source>
</evidence>
<evidence type="ECO:0000303" key="12">
    <source>
    </source>
</evidence>
<evidence type="ECO:0000303" key="13">
    <source>
    </source>
</evidence>
<evidence type="ECO:0000305" key="14"/>
<sequence length="158" mass="17680">MEPLISAPYLTTTKMSAPATLDAACIFCKIIKSEIPSFKLIETKYSYAFLDIQPTAEGHALIIPKYHGAKLHDIPDEFLTDAMPIAKRLAKAMKLDTYNVLQNNGKIAHQEVDHVHFHLIPKRDEKSGLIVGWPAQETDFDKLGKLHKELLAKLEGSD</sequence>
<proteinExistence type="evidence at protein level"/>
<organism>
    <name type="scientific">Saccharomyces cerevisiae (strain ATCC 204508 / S288c)</name>
    <name type="common">Baker's yeast</name>
    <dbReference type="NCBI Taxonomy" id="559292"/>
    <lineage>
        <taxon>Eukaryota</taxon>
        <taxon>Fungi</taxon>
        <taxon>Dikarya</taxon>
        <taxon>Ascomycota</taxon>
        <taxon>Saccharomycotina</taxon>
        <taxon>Saccharomycetes</taxon>
        <taxon>Saccharomycetales</taxon>
        <taxon>Saccharomycetaceae</taxon>
        <taxon>Saccharomyces</taxon>
    </lineage>
</organism>
<reference key="1">
    <citation type="journal article" date="1991" name="J. Cell Biol.">
        <title>Yeast cell cycle protein CDC48p shows full-length homology to the mammalian protein VCP and is a member of a protein family involved in secretion, peroxisome formation, and gene expression.</title>
        <authorList>
            <person name="Froehlich K.-U."/>
            <person name="Fries H.W."/>
            <person name="Ruediger M."/>
            <person name="Erdmann R."/>
            <person name="Botstein D."/>
            <person name="Mecke D."/>
        </authorList>
    </citation>
    <scope>NUCLEOTIDE SEQUENCE [GENOMIC DNA]</scope>
</reference>
<reference key="2">
    <citation type="journal article" date="1997" name="Nature">
        <title>The nucleotide sequence of Saccharomyces cerevisiae chromosome IV.</title>
        <authorList>
            <person name="Jacq C."/>
            <person name="Alt-Moerbe J."/>
            <person name="Andre B."/>
            <person name="Arnold W."/>
            <person name="Bahr A."/>
            <person name="Ballesta J.P.G."/>
            <person name="Bargues M."/>
            <person name="Baron L."/>
            <person name="Becker A."/>
            <person name="Biteau N."/>
            <person name="Bloecker H."/>
            <person name="Blugeon C."/>
            <person name="Boskovic J."/>
            <person name="Brandt P."/>
            <person name="Brueckner M."/>
            <person name="Buitrago M.J."/>
            <person name="Coster F."/>
            <person name="Delaveau T."/>
            <person name="del Rey F."/>
            <person name="Dujon B."/>
            <person name="Eide L.G."/>
            <person name="Garcia-Cantalejo J.M."/>
            <person name="Goffeau A."/>
            <person name="Gomez-Peris A."/>
            <person name="Granotier C."/>
            <person name="Hanemann V."/>
            <person name="Hankeln T."/>
            <person name="Hoheisel J.D."/>
            <person name="Jaeger W."/>
            <person name="Jimenez A."/>
            <person name="Jonniaux J.-L."/>
            <person name="Kraemer C."/>
            <person name="Kuester H."/>
            <person name="Laamanen P."/>
            <person name="Legros Y."/>
            <person name="Louis E.J."/>
            <person name="Moeller-Rieker S."/>
            <person name="Monnet A."/>
            <person name="Moro M."/>
            <person name="Mueller-Auer S."/>
            <person name="Nussbaumer B."/>
            <person name="Paricio N."/>
            <person name="Paulin L."/>
            <person name="Perea J."/>
            <person name="Perez-Alonso M."/>
            <person name="Perez-Ortin J.E."/>
            <person name="Pohl T.M."/>
            <person name="Prydz H."/>
            <person name="Purnelle B."/>
            <person name="Rasmussen S.W."/>
            <person name="Remacha M.A."/>
            <person name="Revuelta J.L."/>
            <person name="Rieger M."/>
            <person name="Salom D."/>
            <person name="Saluz H.P."/>
            <person name="Saiz J.E."/>
            <person name="Saren A.-M."/>
            <person name="Schaefer M."/>
            <person name="Scharfe M."/>
            <person name="Schmidt E.R."/>
            <person name="Schneider C."/>
            <person name="Scholler P."/>
            <person name="Schwarz S."/>
            <person name="Soler-Mira A."/>
            <person name="Urrestarazu L.A."/>
            <person name="Verhasselt P."/>
            <person name="Vissers S."/>
            <person name="Voet M."/>
            <person name="Volckaert G."/>
            <person name="Wagner G."/>
            <person name="Wambutt R."/>
            <person name="Wedler E."/>
            <person name="Wedler H."/>
            <person name="Woelfl S."/>
            <person name="Harris D.E."/>
            <person name="Bowman S."/>
            <person name="Brown D."/>
            <person name="Churcher C.M."/>
            <person name="Connor R."/>
            <person name="Dedman K."/>
            <person name="Gentles S."/>
            <person name="Hamlin N."/>
            <person name="Hunt S."/>
            <person name="Jones L."/>
            <person name="McDonald S."/>
            <person name="Murphy L.D."/>
            <person name="Niblett D."/>
            <person name="Odell C."/>
            <person name="Oliver K."/>
            <person name="Rajandream M.A."/>
            <person name="Richards C."/>
            <person name="Shore L."/>
            <person name="Walsh S.V."/>
            <person name="Barrell B.G."/>
            <person name="Dietrich F.S."/>
            <person name="Mulligan J.T."/>
            <person name="Allen E."/>
            <person name="Araujo R."/>
            <person name="Aviles E."/>
            <person name="Berno A."/>
            <person name="Carpenter J."/>
            <person name="Chen E."/>
            <person name="Cherry J.M."/>
            <person name="Chung E."/>
            <person name="Duncan M."/>
            <person name="Hunicke-Smith S."/>
            <person name="Hyman R.W."/>
            <person name="Komp C."/>
            <person name="Lashkari D."/>
            <person name="Lew H."/>
            <person name="Lin D."/>
            <person name="Mosedale D."/>
            <person name="Nakahara K."/>
            <person name="Namath A."/>
            <person name="Oefner P."/>
            <person name="Oh C."/>
            <person name="Petel F.X."/>
            <person name="Roberts D."/>
            <person name="Schramm S."/>
            <person name="Schroeder M."/>
            <person name="Shogren T."/>
            <person name="Shroff N."/>
            <person name="Winant A."/>
            <person name="Yelton M.A."/>
            <person name="Botstein D."/>
            <person name="Davis R.W."/>
            <person name="Johnston M."/>
            <person name="Andrews S."/>
            <person name="Brinkman R."/>
            <person name="Cooper J."/>
            <person name="Ding H."/>
            <person name="Du Z."/>
            <person name="Favello A."/>
            <person name="Fulton L."/>
            <person name="Gattung S."/>
            <person name="Greco T."/>
            <person name="Hallsworth K."/>
            <person name="Hawkins J."/>
            <person name="Hillier L.W."/>
            <person name="Jier M."/>
            <person name="Johnson D."/>
            <person name="Johnston L."/>
            <person name="Kirsten J."/>
            <person name="Kucaba T."/>
            <person name="Langston Y."/>
            <person name="Latreille P."/>
            <person name="Le T."/>
            <person name="Mardis E."/>
            <person name="Menezes S."/>
            <person name="Miller N."/>
            <person name="Nhan M."/>
            <person name="Pauley A."/>
            <person name="Peluso D."/>
            <person name="Rifkin L."/>
            <person name="Riles L."/>
            <person name="Taich A."/>
            <person name="Trevaskis E."/>
            <person name="Vignati D."/>
            <person name="Wilcox L."/>
            <person name="Wohldman P."/>
            <person name="Vaudin M."/>
            <person name="Wilson R."/>
            <person name="Waterston R."/>
            <person name="Albermann K."/>
            <person name="Hani J."/>
            <person name="Heumann K."/>
            <person name="Kleine K."/>
            <person name="Mewes H.-W."/>
            <person name="Zollner A."/>
            <person name="Zaccaria P."/>
        </authorList>
    </citation>
    <scope>NUCLEOTIDE SEQUENCE [LARGE SCALE GENOMIC DNA]</scope>
    <source>
        <strain>ATCC 204508 / S288c</strain>
    </source>
</reference>
<reference key="3">
    <citation type="journal article" date="2014" name="G3 (Bethesda)">
        <title>The reference genome sequence of Saccharomyces cerevisiae: Then and now.</title>
        <authorList>
            <person name="Engel S.R."/>
            <person name="Dietrich F.S."/>
            <person name="Fisk D.G."/>
            <person name="Binkley G."/>
            <person name="Balakrishnan R."/>
            <person name="Costanzo M.C."/>
            <person name="Dwight S.S."/>
            <person name="Hitz B.C."/>
            <person name="Karra K."/>
            <person name="Nash R.S."/>
            <person name="Weng S."/>
            <person name="Wong E.D."/>
            <person name="Lloyd P."/>
            <person name="Skrzypek M.S."/>
            <person name="Miyasato S.R."/>
            <person name="Simison M."/>
            <person name="Cherry J.M."/>
        </authorList>
    </citation>
    <scope>GENOME REANNOTATION</scope>
    <source>
        <strain>ATCC 204508 / S288c</strain>
    </source>
</reference>
<reference key="4">
    <citation type="journal article" date="1992" name="DNA Seq.">
        <title>The HIT protein family: a new family of proteins present in prokaryotes, yeast and mammals.</title>
        <authorList>
            <person name="Seraphin B."/>
        </authorList>
    </citation>
    <scope>IDENTIFICATION</scope>
    <scope>SIMILARITY TO OTHER MEMBERS OF THE HIT FAMILY</scope>
</reference>
<reference key="5">
    <citation type="journal article" date="2000" name="J. Biol. Chem.">
        <title>Interactions of Cdk7 and Kin28 with Hint/PKCI-1 and Hnt1 histidine triad proteins.</title>
        <authorList>
            <person name="Korsisaari N."/>
            <person name="Makela T.P."/>
        </authorList>
    </citation>
    <scope>FUNCTION</scope>
    <scope>INTERACTION WITH KIN28</scope>
</reference>
<reference key="6">
    <citation type="journal article" date="2002" name="J. Biol. Chem.">
        <title>Adenosine monophosphoramidase activity of Hint and Hnt1 supports function of Kin28, Ccl1, and Tfb3.</title>
        <authorList>
            <person name="Bieganowski P."/>
            <person name="Garrison P.N."/>
            <person name="Hodawadekar S.C."/>
            <person name="Faye G."/>
            <person name="Barnes L.D."/>
            <person name="Brenner C."/>
        </authorList>
    </citation>
    <scope>FUNCTION</scope>
    <scope>CATALYTIC ACTIVITY</scope>
    <scope>BIOPHYSICOCHEMICAL PROPERTIES</scope>
    <scope>COFACTOR</scope>
    <scope>ACTIVE SITE</scope>
    <scope>MUTAGENESIS OF HIS-116</scope>
</reference>
<reference key="7">
    <citation type="journal article" date="2003" name="Nature">
        <title>Global analysis of protein expression in yeast.</title>
        <authorList>
            <person name="Ghaemmaghami S."/>
            <person name="Huh W.-K."/>
            <person name="Bower K."/>
            <person name="Howson R.W."/>
            <person name="Belle A."/>
            <person name="Dephoure N."/>
            <person name="O'Shea E.K."/>
            <person name="Weissman J.S."/>
        </authorList>
    </citation>
    <scope>LEVEL OF PROTEIN EXPRESSION [LARGE SCALE ANALYSIS]</scope>
</reference>
<reference key="8">
    <citation type="journal article" date="2012" name="Nat. Cell Biol.">
        <title>Dissecting DNA damage response pathways by analysing protein localization and abundance changes during DNA replication stress.</title>
        <authorList>
            <person name="Tkach J.M."/>
            <person name="Yimit A."/>
            <person name="Lee A.Y."/>
            <person name="Riffle M."/>
            <person name="Costanzo M."/>
            <person name="Jaschob D."/>
            <person name="Hendry J.A."/>
            <person name="Ou J."/>
            <person name="Moffat J."/>
            <person name="Boone C."/>
            <person name="Davis T.N."/>
            <person name="Nislow C."/>
            <person name="Brown G.W."/>
        </authorList>
    </citation>
    <scope>INDUCTION</scope>
</reference>
<reference key="9">
    <citation type="journal article" date="2020" name="Biochem. Biophys. Res. Commun.">
        <title>Crucial role of leaky initiation of uORF3 in the downregulation of HNT1 by ER stress.</title>
        <authorList>
            <person name="Matsuki Y."/>
            <person name="Saito T."/>
            <person name="Nakano Y."/>
            <person name="Hashimoto S."/>
            <person name="Matsuo Y."/>
            <person name="Inada T."/>
        </authorList>
    </citation>
    <scope>INDUCTION</scope>
</reference>
<reference key="10">
    <citation type="journal article" date="2020" name="Mol. Microbiol.">
        <title>Changes in transcription start sites of Zap1-regulated genes during zinc deficiency: Implications for HNT1 gene regulation.</title>
        <authorList>
            <person name="Tatip S."/>
            <person name="Taggart J."/>
            <person name="Wang Y."/>
            <person name="MacDiarmid C.W."/>
            <person name="Eide D.J."/>
        </authorList>
    </citation>
    <scope>INDUCTION</scope>
</reference>
<reference key="11">
    <citation type="journal article" date="2020" name="Sci. Rep.">
        <title>Ribosomal protein S7 ubiquitination during ER stress in yeast is associated with selective mRNA translation and stress outcome.</title>
        <authorList>
            <person name="Matsuki Y."/>
            <person name="Matsuo Y."/>
            <person name="Nakano Y."/>
            <person name="Iwasaki S."/>
            <person name="Yoko H."/>
            <person name="Udagawa T."/>
            <person name="Li S."/>
            <person name="Saeki Y."/>
            <person name="Yoshihisa T."/>
            <person name="Tanaka K."/>
            <person name="Ingolia N.T."/>
            <person name="Inada T."/>
        </authorList>
    </citation>
    <scope>INDUCTION</scope>
</reference>
<feature type="chain" id="PRO_0000109800" description="Adenosine 5'-monophosphoramidase HNT1">
    <location>
        <begin position="1"/>
        <end position="158"/>
    </location>
</feature>
<feature type="domain" description="HIT" evidence="3">
    <location>
        <begin position="26"/>
        <end position="129"/>
    </location>
</feature>
<feature type="short sequence motif" description="Histidine triad motif" evidence="3">
    <location>
        <begin position="114"/>
        <end position="118"/>
    </location>
</feature>
<feature type="active site" description="Tele-AMP-histidine intermediate" evidence="5">
    <location>
        <position position="116"/>
    </location>
</feature>
<feature type="binding site" evidence="1">
    <location>
        <begin position="51"/>
        <end position="52"/>
    </location>
    <ligand>
        <name>AMP</name>
        <dbReference type="ChEBI" id="CHEBI:456215"/>
    </ligand>
</feature>
<feature type="binding site" evidence="1">
    <location>
        <position position="103"/>
    </location>
    <ligand>
        <name>AMP</name>
        <dbReference type="ChEBI" id="CHEBI:456215"/>
    </ligand>
</feature>
<feature type="binding site" evidence="1">
    <location>
        <begin position="109"/>
        <end position="111"/>
    </location>
    <ligand>
        <name>AMP</name>
        <dbReference type="ChEBI" id="CHEBI:456215"/>
    </ligand>
</feature>
<feature type="binding site" evidence="1">
    <location>
        <begin position="116"/>
        <end position="118"/>
    </location>
    <ligand>
        <name>AMP</name>
        <dbReference type="ChEBI" id="CHEBI:456215"/>
    </ligand>
</feature>
<feature type="mutagenesis site" description="Loss of enzymatic activity." evidence="5">
    <original>H</original>
    <variation>A</variation>
    <location>
        <position position="116"/>
    </location>
</feature>
<name>HNT1_YEAST</name>
<gene>
    <name evidence="11" type="primary">HNT1</name>
    <name evidence="13" type="synonym">HIT1</name>
    <name type="ordered locus">YDL125C</name>
</gene>
<accession>Q04344</accession>
<accession>D6VRM5</accession>
<dbReference type="EC" id="3.-.-.-" evidence="5"/>
<dbReference type="EMBL" id="X56956">
    <property type="protein sequence ID" value="CAA40275.1"/>
    <property type="molecule type" value="Genomic_DNA"/>
</dbReference>
<dbReference type="EMBL" id="Z74173">
    <property type="protein sequence ID" value="CAA98693.1"/>
    <property type="molecule type" value="Genomic_DNA"/>
</dbReference>
<dbReference type="EMBL" id="BK006938">
    <property type="protein sequence ID" value="DAA11735.1"/>
    <property type="molecule type" value="Genomic_DNA"/>
</dbReference>
<dbReference type="PIR" id="B39977">
    <property type="entry name" value="B39977"/>
</dbReference>
<dbReference type="RefSeq" id="NP_010158.1">
    <property type="nucleotide sequence ID" value="NM_001180184.1"/>
</dbReference>
<dbReference type="SMR" id="Q04344"/>
<dbReference type="BioGRID" id="31938">
    <property type="interactions" value="85"/>
</dbReference>
<dbReference type="DIP" id="DIP-2760N"/>
<dbReference type="FunCoup" id="Q04344">
    <property type="interactions" value="784"/>
</dbReference>
<dbReference type="IntAct" id="Q04344">
    <property type="interactions" value="4"/>
</dbReference>
<dbReference type="MINT" id="Q04344"/>
<dbReference type="STRING" id="4932.YDL125C"/>
<dbReference type="iPTMnet" id="Q04344"/>
<dbReference type="PaxDb" id="4932-YDL125C"/>
<dbReference type="PeptideAtlas" id="Q04344"/>
<dbReference type="EnsemblFungi" id="YDL125C_mRNA">
    <property type="protein sequence ID" value="YDL125C"/>
    <property type="gene ID" value="YDL125C"/>
</dbReference>
<dbReference type="GeneID" id="851432"/>
<dbReference type="KEGG" id="sce:YDL125C"/>
<dbReference type="AGR" id="SGD:S000002283"/>
<dbReference type="SGD" id="S000002283">
    <property type="gene designation" value="HNT1"/>
</dbReference>
<dbReference type="VEuPathDB" id="FungiDB:YDL125C"/>
<dbReference type="eggNOG" id="KOG3275">
    <property type="taxonomic scope" value="Eukaryota"/>
</dbReference>
<dbReference type="HOGENOM" id="CLU_056776_3_0_1"/>
<dbReference type="InParanoid" id="Q04344"/>
<dbReference type="OMA" id="YRVVMNC"/>
<dbReference type="OrthoDB" id="672793at2759"/>
<dbReference type="BioCyc" id="YEAST:G3O-29524-MONOMER"/>
<dbReference type="BioGRID-ORCS" id="851432">
    <property type="hits" value="5 hits in 10 CRISPR screens"/>
</dbReference>
<dbReference type="PRO" id="PR:Q04344"/>
<dbReference type="Proteomes" id="UP000002311">
    <property type="component" value="Chromosome IV"/>
</dbReference>
<dbReference type="RNAct" id="Q04344">
    <property type="molecule type" value="protein"/>
</dbReference>
<dbReference type="GO" id="GO:0005737">
    <property type="term" value="C:cytoplasm"/>
    <property type="evidence" value="ECO:0007005"/>
    <property type="project" value="SGD"/>
</dbReference>
<dbReference type="GO" id="GO:0005634">
    <property type="term" value="C:nucleus"/>
    <property type="evidence" value="ECO:0007005"/>
    <property type="project" value="SGD"/>
</dbReference>
<dbReference type="GO" id="GO:0043530">
    <property type="term" value="F:adenosine 5'-monophosphoramidase activity"/>
    <property type="evidence" value="ECO:0000314"/>
    <property type="project" value="SGD"/>
</dbReference>
<dbReference type="GO" id="GO:0000166">
    <property type="term" value="F:nucleotide binding"/>
    <property type="evidence" value="ECO:0007669"/>
    <property type="project" value="UniProtKB-KW"/>
</dbReference>
<dbReference type="GO" id="GO:0009117">
    <property type="term" value="P:nucleotide metabolic process"/>
    <property type="evidence" value="ECO:0000314"/>
    <property type="project" value="SGD"/>
</dbReference>
<dbReference type="CDD" id="cd01277">
    <property type="entry name" value="HINT_subgroup"/>
    <property type="match status" value="1"/>
</dbReference>
<dbReference type="FunFam" id="3.30.428.10:FF:000013">
    <property type="entry name" value="Hit family protein 1"/>
    <property type="match status" value="1"/>
</dbReference>
<dbReference type="Gene3D" id="3.30.428.10">
    <property type="entry name" value="HIT-like"/>
    <property type="match status" value="1"/>
</dbReference>
<dbReference type="InterPro" id="IPR039384">
    <property type="entry name" value="HINT"/>
</dbReference>
<dbReference type="InterPro" id="IPR019808">
    <property type="entry name" value="Histidine_triad_CS"/>
</dbReference>
<dbReference type="InterPro" id="IPR001310">
    <property type="entry name" value="Histidine_triad_HIT"/>
</dbReference>
<dbReference type="InterPro" id="IPR011146">
    <property type="entry name" value="HIT-like"/>
</dbReference>
<dbReference type="InterPro" id="IPR036265">
    <property type="entry name" value="HIT-like_sf"/>
</dbReference>
<dbReference type="PANTHER" id="PTHR46648:SF1">
    <property type="entry name" value="ADENOSINE 5'-MONOPHOSPHORAMIDASE HNT1"/>
    <property type="match status" value="1"/>
</dbReference>
<dbReference type="PANTHER" id="PTHR46648">
    <property type="entry name" value="HIT FAMILY PROTEIN 1"/>
    <property type="match status" value="1"/>
</dbReference>
<dbReference type="Pfam" id="PF01230">
    <property type="entry name" value="HIT"/>
    <property type="match status" value="1"/>
</dbReference>
<dbReference type="PRINTS" id="PR00332">
    <property type="entry name" value="HISTRIAD"/>
</dbReference>
<dbReference type="SUPFAM" id="SSF54197">
    <property type="entry name" value="HIT-like"/>
    <property type="match status" value="1"/>
</dbReference>
<dbReference type="PROSITE" id="PS00892">
    <property type="entry name" value="HIT_1"/>
    <property type="match status" value="1"/>
</dbReference>
<dbReference type="PROSITE" id="PS51084">
    <property type="entry name" value="HIT_2"/>
    <property type="match status" value="1"/>
</dbReference>
<protein>
    <recommendedName>
        <fullName evidence="12">Adenosine 5'-monophosphoramidase HNT1</fullName>
        <ecNumber evidence="5">3.-.-.-</ecNumber>
    </recommendedName>
    <alternativeName>
        <fullName evidence="12">Histidine triad nucleotide-binding protein HNT1</fullName>
        <shortName evidence="12">HINT</shortName>
    </alternativeName>
    <alternativeName>
        <fullName evidence="11">Hit family protein 1</fullName>
    </alternativeName>
</protein>
<comment type="function">
    <text evidence="4 5">Hydrolyzes adenosine 5'-monophosphoramidate substrates such as AMP-morpholidate, AMP-N-alanine methyl ester, AMP-alpha-acetyl lysine methyl ester and AMP-NH2 (PubMed:11805111). Plays a role in the regulation of kinase KIN28 function (PubMed:10958787). Essential for growth on galactose media at elevated temperatures (PubMed:11805111).</text>
</comment>
<comment type="catalytic activity">
    <reaction evidence="5">
        <text>adenosine 5'-phosphoramidate + H2O = AMP + NH4(+)</text>
        <dbReference type="Rhea" id="RHEA:67916"/>
        <dbReference type="ChEBI" id="CHEBI:15377"/>
        <dbReference type="ChEBI" id="CHEBI:28938"/>
        <dbReference type="ChEBI" id="CHEBI:57890"/>
        <dbReference type="ChEBI" id="CHEBI:456215"/>
    </reaction>
    <physiologicalReaction direction="left-to-right" evidence="5">
        <dbReference type="Rhea" id="RHEA:67917"/>
    </physiologicalReaction>
</comment>
<comment type="cofactor">
    <cofactor evidence="5">
        <name>Mg(2+)</name>
        <dbReference type="ChEBI" id="CHEBI:18420"/>
    </cofactor>
</comment>
<comment type="biophysicochemical properties">
    <kinetics>
        <KM evidence="5">870 nM for adenosine 5'-monophosphoramidate</KM>
    </kinetics>
</comment>
<comment type="subunit">
    <text evidence="2 4">Homodimer (By similarity). Interacts with KIN28 (PubMed:10958787).</text>
</comment>
<comment type="induction">
    <text evidence="7 8 9 10">Expression is increased in response to DNA replication stress (PubMed:22842922). Expression is regulated by ZAP1 during zinc-deficiency via changes in transcription start sites (PubMed:31692084). Expression is also down-regulated during unfolded protein response (UPR) (PubMed:32475637, PubMed:33184379).</text>
</comment>
<comment type="miscellaneous">
    <text evidence="6">Present with 5410 molecules/cell in log phase SD medium.</text>
</comment>
<comment type="similarity">
    <text evidence="14">Belongs to the HINT family.</text>
</comment>
<comment type="caution">
    <text evidence="14">It is uncertain whether Met-1 or Met-15 is the initiator.</text>
</comment>